<comment type="function">
    <text evidence="1">Catalyzes the phosphorylation of the hydroxyl group of 4-methyl-5-beta-hydroxyethylthiazole (THZ).</text>
</comment>
<comment type="catalytic activity">
    <reaction evidence="1">
        <text>5-(2-hydroxyethyl)-4-methylthiazole + ATP = 4-methyl-5-(2-phosphooxyethyl)-thiazole + ADP + H(+)</text>
        <dbReference type="Rhea" id="RHEA:24212"/>
        <dbReference type="ChEBI" id="CHEBI:15378"/>
        <dbReference type="ChEBI" id="CHEBI:17957"/>
        <dbReference type="ChEBI" id="CHEBI:30616"/>
        <dbReference type="ChEBI" id="CHEBI:58296"/>
        <dbReference type="ChEBI" id="CHEBI:456216"/>
        <dbReference type="EC" id="2.7.1.50"/>
    </reaction>
</comment>
<comment type="cofactor">
    <cofactor evidence="1">
        <name>Mg(2+)</name>
        <dbReference type="ChEBI" id="CHEBI:18420"/>
    </cofactor>
</comment>
<comment type="pathway">
    <text evidence="1">Cofactor biosynthesis; thiamine diphosphate biosynthesis; 4-methyl-5-(2-phosphoethyl)-thiazole from 5-(2-hydroxyethyl)-4-methylthiazole: step 1/1.</text>
</comment>
<comment type="similarity">
    <text evidence="1">Belongs to the Thz kinase family.</text>
</comment>
<accession>C4ZSI8</accession>
<reference key="1">
    <citation type="journal article" date="2009" name="J. Bacteriol.">
        <title>Genomic sequencing reveals regulatory mutations and recombinational events in the widely used MC4100 lineage of Escherichia coli K-12.</title>
        <authorList>
            <person name="Ferenci T."/>
            <person name="Zhou Z."/>
            <person name="Betteridge T."/>
            <person name="Ren Y."/>
            <person name="Liu Y."/>
            <person name="Feng L."/>
            <person name="Reeves P.R."/>
            <person name="Wang L."/>
        </authorList>
    </citation>
    <scope>NUCLEOTIDE SEQUENCE [LARGE SCALE GENOMIC DNA]</scope>
    <source>
        <strain>K12 / MC4100 / BW2952</strain>
    </source>
</reference>
<sequence length="262" mass="27339">MQVDLLGSAQSAHALHLFHQHSPLVHCMTNDVVQTFTANTLLALGASPAMVIETEEASQFAAIASALLINVGTLTQPRAQAMRAAVEQAKSSQTPWTLDPVAVGALDYRRHFCHELLSFKPAAIRGNASEIMALAGIANGGRGVDTTDAAANAIPAAQTLARETGAIVVVTGEMDYVTDGHRIIGIHGGDPLMTKVVGTGCALSAVVAACCALPGDTLENVASACHWMKQAGERAVARSEGPGSFVPHFLDALWQLTQEVQA</sequence>
<feature type="chain" id="PRO_1000204359" description="Hydroxyethylthiazole kinase">
    <location>
        <begin position="1"/>
        <end position="262"/>
    </location>
</feature>
<feature type="binding site" evidence="1">
    <location>
        <position position="50"/>
    </location>
    <ligand>
        <name>substrate</name>
    </ligand>
</feature>
<feature type="binding site" evidence="1">
    <location>
        <position position="125"/>
    </location>
    <ligand>
        <name>ATP</name>
        <dbReference type="ChEBI" id="CHEBI:30616"/>
    </ligand>
</feature>
<feature type="binding site" evidence="1">
    <location>
        <position position="171"/>
    </location>
    <ligand>
        <name>ATP</name>
        <dbReference type="ChEBI" id="CHEBI:30616"/>
    </ligand>
</feature>
<feature type="binding site" evidence="1">
    <location>
        <position position="198"/>
    </location>
    <ligand>
        <name>substrate</name>
    </ligand>
</feature>
<name>THIM_ECOBW</name>
<gene>
    <name evidence="1" type="primary">thiM</name>
    <name type="ordered locus">BWG_1890</name>
</gene>
<evidence type="ECO:0000255" key="1">
    <source>
        <dbReference type="HAMAP-Rule" id="MF_00228"/>
    </source>
</evidence>
<protein>
    <recommendedName>
        <fullName evidence="1">Hydroxyethylthiazole kinase</fullName>
        <ecNumber evidence="1">2.7.1.50</ecNumber>
    </recommendedName>
    <alternativeName>
        <fullName evidence="1">4-methyl-5-beta-hydroxyethylthiazole kinase</fullName>
        <shortName evidence="1">TH kinase</shortName>
        <shortName evidence="1">Thz kinase</shortName>
    </alternativeName>
</protein>
<organism>
    <name type="scientific">Escherichia coli (strain K12 / MC4100 / BW2952)</name>
    <dbReference type="NCBI Taxonomy" id="595496"/>
    <lineage>
        <taxon>Bacteria</taxon>
        <taxon>Pseudomonadati</taxon>
        <taxon>Pseudomonadota</taxon>
        <taxon>Gammaproteobacteria</taxon>
        <taxon>Enterobacterales</taxon>
        <taxon>Enterobacteriaceae</taxon>
        <taxon>Escherichia</taxon>
    </lineage>
</organism>
<keyword id="KW-0067">ATP-binding</keyword>
<keyword id="KW-0418">Kinase</keyword>
<keyword id="KW-0460">Magnesium</keyword>
<keyword id="KW-0479">Metal-binding</keyword>
<keyword id="KW-0547">Nucleotide-binding</keyword>
<keyword id="KW-0784">Thiamine biosynthesis</keyword>
<keyword id="KW-0808">Transferase</keyword>
<proteinExistence type="inferred from homology"/>
<dbReference type="EC" id="2.7.1.50" evidence="1"/>
<dbReference type="EMBL" id="CP001396">
    <property type="protein sequence ID" value="ACR63443.1"/>
    <property type="molecule type" value="Genomic_DNA"/>
</dbReference>
<dbReference type="RefSeq" id="WP_001195564.1">
    <property type="nucleotide sequence ID" value="NC_012759.1"/>
</dbReference>
<dbReference type="SMR" id="C4ZSI8"/>
<dbReference type="KEGG" id="ebw:BWG_1890"/>
<dbReference type="HOGENOM" id="CLU_019943_0_1_6"/>
<dbReference type="UniPathway" id="UPA00060">
    <property type="reaction ID" value="UER00139"/>
</dbReference>
<dbReference type="GO" id="GO:0005524">
    <property type="term" value="F:ATP binding"/>
    <property type="evidence" value="ECO:0007669"/>
    <property type="project" value="UniProtKB-UniRule"/>
</dbReference>
<dbReference type="GO" id="GO:0004417">
    <property type="term" value="F:hydroxyethylthiazole kinase activity"/>
    <property type="evidence" value="ECO:0007669"/>
    <property type="project" value="UniProtKB-UniRule"/>
</dbReference>
<dbReference type="GO" id="GO:0000287">
    <property type="term" value="F:magnesium ion binding"/>
    <property type="evidence" value="ECO:0007669"/>
    <property type="project" value="UniProtKB-UniRule"/>
</dbReference>
<dbReference type="GO" id="GO:0009228">
    <property type="term" value="P:thiamine biosynthetic process"/>
    <property type="evidence" value="ECO:0007669"/>
    <property type="project" value="UniProtKB-KW"/>
</dbReference>
<dbReference type="GO" id="GO:0009229">
    <property type="term" value="P:thiamine diphosphate biosynthetic process"/>
    <property type="evidence" value="ECO:0007669"/>
    <property type="project" value="UniProtKB-UniRule"/>
</dbReference>
<dbReference type="CDD" id="cd01170">
    <property type="entry name" value="THZ_kinase"/>
    <property type="match status" value="1"/>
</dbReference>
<dbReference type="FunFam" id="3.40.1190.20:FF:000015">
    <property type="entry name" value="Hydroxyethylthiazole kinase"/>
    <property type="match status" value="1"/>
</dbReference>
<dbReference type="Gene3D" id="3.40.1190.20">
    <property type="match status" value="1"/>
</dbReference>
<dbReference type="HAMAP" id="MF_00228">
    <property type="entry name" value="Thz_kinase"/>
    <property type="match status" value="1"/>
</dbReference>
<dbReference type="InterPro" id="IPR000417">
    <property type="entry name" value="Hyethyz_kinase"/>
</dbReference>
<dbReference type="InterPro" id="IPR029056">
    <property type="entry name" value="Ribokinase-like"/>
</dbReference>
<dbReference type="NCBIfam" id="NF006830">
    <property type="entry name" value="PRK09355.1"/>
    <property type="match status" value="1"/>
</dbReference>
<dbReference type="NCBIfam" id="TIGR00694">
    <property type="entry name" value="thiM"/>
    <property type="match status" value="1"/>
</dbReference>
<dbReference type="Pfam" id="PF02110">
    <property type="entry name" value="HK"/>
    <property type="match status" value="1"/>
</dbReference>
<dbReference type="PIRSF" id="PIRSF000513">
    <property type="entry name" value="Thz_kinase"/>
    <property type="match status" value="1"/>
</dbReference>
<dbReference type="PRINTS" id="PR01099">
    <property type="entry name" value="HYETHTZKNASE"/>
</dbReference>
<dbReference type="SUPFAM" id="SSF53613">
    <property type="entry name" value="Ribokinase-like"/>
    <property type="match status" value="1"/>
</dbReference>